<keyword id="KW-1003">Cell membrane</keyword>
<keyword id="KW-0472">Membrane</keyword>
<keyword id="KW-1185">Reference proteome</keyword>
<keyword id="KW-0812">Transmembrane</keyword>
<keyword id="KW-1133">Transmembrane helix</keyword>
<organism>
    <name type="scientific">Methanocaldococcus jannaschii (strain ATCC 43067 / DSM 2661 / JAL-1 / JCM 10045 / NBRC 100440)</name>
    <name type="common">Methanococcus jannaschii</name>
    <dbReference type="NCBI Taxonomy" id="243232"/>
    <lineage>
        <taxon>Archaea</taxon>
        <taxon>Methanobacteriati</taxon>
        <taxon>Methanobacteriota</taxon>
        <taxon>Methanomada group</taxon>
        <taxon>Methanococci</taxon>
        <taxon>Methanococcales</taxon>
        <taxon>Methanocaldococcaceae</taxon>
        <taxon>Methanocaldococcus</taxon>
    </lineage>
</organism>
<dbReference type="EMBL" id="L77117">
    <property type="protein sequence ID" value="AAB98140.1"/>
    <property type="molecule type" value="Genomic_DNA"/>
</dbReference>
<dbReference type="PIR" id="F64318">
    <property type="entry name" value="F64318"/>
</dbReference>
<dbReference type="RefSeq" id="WP_010869644.1">
    <property type="nucleotide sequence ID" value="NC_000909.1"/>
</dbReference>
<dbReference type="STRING" id="243232.MJ_0149"/>
<dbReference type="PaxDb" id="243232-MJ_0149"/>
<dbReference type="EnsemblBacteria" id="AAB98140">
    <property type="protein sequence ID" value="AAB98140"/>
    <property type="gene ID" value="MJ_0149"/>
</dbReference>
<dbReference type="GeneID" id="43875333"/>
<dbReference type="KEGG" id="mja:MJ_0149"/>
<dbReference type="eggNOG" id="arCOG08276">
    <property type="taxonomic scope" value="Archaea"/>
</dbReference>
<dbReference type="HOGENOM" id="CLU_204983_0_0_2"/>
<dbReference type="InParanoid" id="Q57613"/>
<dbReference type="OrthoDB" id="63867at2157"/>
<dbReference type="Proteomes" id="UP000000805">
    <property type="component" value="Chromosome"/>
</dbReference>
<dbReference type="GO" id="GO:0005886">
    <property type="term" value="C:plasma membrane"/>
    <property type="evidence" value="ECO:0007669"/>
    <property type="project" value="UniProtKB-SubCell"/>
</dbReference>
<dbReference type="InterPro" id="IPR032820">
    <property type="entry name" value="ATPase_put"/>
</dbReference>
<dbReference type="Pfam" id="PF09527">
    <property type="entry name" value="ATPase_gene1"/>
    <property type="match status" value="1"/>
</dbReference>
<reference key="1">
    <citation type="journal article" date="1996" name="Science">
        <title>Complete genome sequence of the methanogenic archaeon, Methanococcus jannaschii.</title>
        <authorList>
            <person name="Bult C.J."/>
            <person name="White O."/>
            <person name="Olsen G.J."/>
            <person name="Zhou L."/>
            <person name="Fleischmann R.D."/>
            <person name="Sutton G.G."/>
            <person name="Blake J.A."/>
            <person name="FitzGerald L.M."/>
            <person name="Clayton R.A."/>
            <person name="Gocayne J.D."/>
            <person name="Kerlavage A.R."/>
            <person name="Dougherty B.A."/>
            <person name="Tomb J.-F."/>
            <person name="Adams M.D."/>
            <person name="Reich C.I."/>
            <person name="Overbeek R."/>
            <person name="Kirkness E.F."/>
            <person name="Weinstock K.G."/>
            <person name="Merrick J.M."/>
            <person name="Glodek A."/>
            <person name="Scott J.L."/>
            <person name="Geoghagen N.S.M."/>
            <person name="Weidman J.F."/>
            <person name="Fuhrmann J.L."/>
            <person name="Nguyen D."/>
            <person name="Utterback T.R."/>
            <person name="Kelley J.M."/>
            <person name="Peterson J.D."/>
            <person name="Sadow P.W."/>
            <person name="Hanna M.C."/>
            <person name="Cotton M.D."/>
            <person name="Roberts K.M."/>
            <person name="Hurst M.A."/>
            <person name="Kaine B.P."/>
            <person name="Borodovsky M."/>
            <person name="Klenk H.-P."/>
            <person name="Fraser C.M."/>
            <person name="Smith H.O."/>
            <person name="Woese C.R."/>
            <person name="Venter J.C."/>
        </authorList>
    </citation>
    <scope>NUCLEOTIDE SEQUENCE [LARGE SCALE GENOMIC DNA]</scope>
    <source>
        <strain>ATCC 43067 / DSM 2661 / JAL-1 / JCM 10045 / NBRC 100440</strain>
    </source>
</reference>
<accession>Q57613</accession>
<name>Y149_METJA</name>
<evidence type="ECO:0000255" key="1"/>
<evidence type="ECO:0000305" key="2"/>
<gene>
    <name type="ordered locus">MJ0149</name>
</gene>
<proteinExistence type="predicted"/>
<protein>
    <recommendedName>
        <fullName>Uncharacterized protein MJ0149</fullName>
    </recommendedName>
</protein>
<sequence>MLRDIAFEFFIMIALGIFIGYIIAEYTDNNLWIVVFLLLGIFCAFGRLFKMIKDYEKR</sequence>
<feature type="chain" id="PRO_0000106719" description="Uncharacterized protein MJ0149">
    <location>
        <begin position="1"/>
        <end position="58"/>
    </location>
</feature>
<feature type="transmembrane region" description="Helical" evidence="1">
    <location>
        <begin position="5"/>
        <end position="25"/>
    </location>
</feature>
<feature type="transmembrane region" description="Helical" evidence="1">
    <location>
        <begin position="32"/>
        <end position="52"/>
    </location>
</feature>
<comment type="subcellular location">
    <subcellularLocation>
        <location evidence="2">Cell membrane</location>
        <topology evidence="2">Multi-pass membrane protein</topology>
    </subcellularLocation>
</comment>